<proteinExistence type="inferred from homology"/>
<sequence>MAHKKAGGSTNNGRDSESKRLGVKRFGGESVLAGNILVRQRGTKFHAGINVGIGKDHTLFAKATGVVKFEKKGPKMRSFITIVAE</sequence>
<comment type="similarity">
    <text evidence="1">Belongs to the bacterial ribosomal protein bL27 family.</text>
</comment>
<protein>
    <recommendedName>
        <fullName evidence="1">Large ribosomal subunit protein bL27</fullName>
    </recommendedName>
    <alternativeName>
        <fullName evidence="3">50S ribosomal protein L27</fullName>
    </alternativeName>
</protein>
<keyword id="KW-1185">Reference proteome</keyword>
<keyword id="KW-0687">Ribonucleoprotein</keyword>
<keyword id="KW-0689">Ribosomal protein</keyword>
<dbReference type="EMBL" id="CP000510">
    <property type="protein sequence ID" value="ABM02380.1"/>
    <property type="molecule type" value="Genomic_DNA"/>
</dbReference>
<dbReference type="RefSeq" id="WP_011768939.1">
    <property type="nucleotide sequence ID" value="NC_008709.1"/>
</dbReference>
<dbReference type="SMR" id="A1SSB5"/>
<dbReference type="STRING" id="357804.Ping_0526"/>
<dbReference type="KEGG" id="pin:Ping_0526"/>
<dbReference type="eggNOG" id="COG0211">
    <property type="taxonomic scope" value="Bacteria"/>
</dbReference>
<dbReference type="HOGENOM" id="CLU_095424_4_1_6"/>
<dbReference type="OrthoDB" id="9803474at2"/>
<dbReference type="Proteomes" id="UP000000639">
    <property type="component" value="Chromosome"/>
</dbReference>
<dbReference type="GO" id="GO:0022625">
    <property type="term" value="C:cytosolic large ribosomal subunit"/>
    <property type="evidence" value="ECO:0007669"/>
    <property type="project" value="TreeGrafter"/>
</dbReference>
<dbReference type="GO" id="GO:0003735">
    <property type="term" value="F:structural constituent of ribosome"/>
    <property type="evidence" value="ECO:0007669"/>
    <property type="project" value="InterPro"/>
</dbReference>
<dbReference type="GO" id="GO:0006412">
    <property type="term" value="P:translation"/>
    <property type="evidence" value="ECO:0007669"/>
    <property type="project" value="UniProtKB-UniRule"/>
</dbReference>
<dbReference type="FunFam" id="2.40.50.100:FF:000001">
    <property type="entry name" value="50S ribosomal protein L27"/>
    <property type="match status" value="1"/>
</dbReference>
<dbReference type="Gene3D" id="2.40.50.100">
    <property type="match status" value="1"/>
</dbReference>
<dbReference type="HAMAP" id="MF_00539">
    <property type="entry name" value="Ribosomal_bL27"/>
    <property type="match status" value="1"/>
</dbReference>
<dbReference type="InterPro" id="IPR001684">
    <property type="entry name" value="Ribosomal_bL27"/>
</dbReference>
<dbReference type="InterPro" id="IPR018261">
    <property type="entry name" value="Ribosomal_bL27_CS"/>
</dbReference>
<dbReference type="NCBIfam" id="TIGR00062">
    <property type="entry name" value="L27"/>
    <property type="match status" value="1"/>
</dbReference>
<dbReference type="PANTHER" id="PTHR15893:SF0">
    <property type="entry name" value="LARGE RIBOSOMAL SUBUNIT PROTEIN BL27M"/>
    <property type="match status" value="1"/>
</dbReference>
<dbReference type="PANTHER" id="PTHR15893">
    <property type="entry name" value="RIBOSOMAL PROTEIN L27"/>
    <property type="match status" value="1"/>
</dbReference>
<dbReference type="Pfam" id="PF01016">
    <property type="entry name" value="Ribosomal_L27"/>
    <property type="match status" value="1"/>
</dbReference>
<dbReference type="PRINTS" id="PR00063">
    <property type="entry name" value="RIBOSOMALL27"/>
</dbReference>
<dbReference type="SUPFAM" id="SSF110324">
    <property type="entry name" value="Ribosomal L27 protein-like"/>
    <property type="match status" value="1"/>
</dbReference>
<dbReference type="PROSITE" id="PS00831">
    <property type="entry name" value="RIBOSOMAL_L27"/>
    <property type="match status" value="1"/>
</dbReference>
<organism>
    <name type="scientific">Psychromonas ingrahamii (strain DSM 17664 / CCUG 51855 / 37)</name>
    <dbReference type="NCBI Taxonomy" id="357804"/>
    <lineage>
        <taxon>Bacteria</taxon>
        <taxon>Pseudomonadati</taxon>
        <taxon>Pseudomonadota</taxon>
        <taxon>Gammaproteobacteria</taxon>
        <taxon>Alteromonadales</taxon>
        <taxon>Psychromonadaceae</taxon>
        <taxon>Psychromonas</taxon>
    </lineage>
</organism>
<accession>A1SSB5</accession>
<feature type="chain" id="PRO_1000017569" description="Large ribosomal subunit protein bL27">
    <location>
        <begin position="1"/>
        <end position="85"/>
    </location>
</feature>
<feature type="region of interest" description="Disordered" evidence="2">
    <location>
        <begin position="1"/>
        <end position="22"/>
    </location>
</feature>
<gene>
    <name evidence="1" type="primary">rpmA</name>
    <name type="ordered locus">Ping_0526</name>
</gene>
<name>RL27_PSYIN</name>
<reference key="1">
    <citation type="journal article" date="2008" name="BMC Genomics">
        <title>Genomics of an extreme psychrophile, Psychromonas ingrahamii.</title>
        <authorList>
            <person name="Riley M."/>
            <person name="Staley J.T."/>
            <person name="Danchin A."/>
            <person name="Wang T.Z."/>
            <person name="Brettin T.S."/>
            <person name="Hauser L.J."/>
            <person name="Land M.L."/>
            <person name="Thompson L.S."/>
        </authorList>
    </citation>
    <scope>NUCLEOTIDE SEQUENCE [LARGE SCALE GENOMIC DNA]</scope>
    <source>
        <strain>DSM 17664 / CCUG 51855 / 37</strain>
    </source>
</reference>
<evidence type="ECO:0000255" key="1">
    <source>
        <dbReference type="HAMAP-Rule" id="MF_00539"/>
    </source>
</evidence>
<evidence type="ECO:0000256" key="2">
    <source>
        <dbReference type="SAM" id="MobiDB-lite"/>
    </source>
</evidence>
<evidence type="ECO:0000305" key="3"/>